<reference key="1">
    <citation type="journal article" date="2002" name="DNA Res.">
        <title>Complete genomic sequence of nitrogen-fixing symbiotic bacterium Bradyrhizobium japonicum USDA110.</title>
        <authorList>
            <person name="Kaneko T."/>
            <person name="Nakamura Y."/>
            <person name="Sato S."/>
            <person name="Minamisawa K."/>
            <person name="Uchiumi T."/>
            <person name="Sasamoto S."/>
            <person name="Watanabe A."/>
            <person name="Idesawa K."/>
            <person name="Iriguchi M."/>
            <person name="Kawashima K."/>
            <person name="Kohara M."/>
            <person name="Matsumoto M."/>
            <person name="Shimpo S."/>
            <person name="Tsuruoka H."/>
            <person name="Wada T."/>
            <person name="Yamada M."/>
            <person name="Tabata S."/>
        </authorList>
    </citation>
    <scope>NUCLEOTIDE SEQUENCE [LARGE SCALE GENOMIC DNA]</scope>
    <source>
        <strain>JCM 10833 / BCRC 13528 / IAM 13628 / NBRC 14792 / USDA 110</strain>
    </source>
</reference>
<comment type="function">
    <text evidence="1">Channel that permits osmotically driven movement of water in both directions. It is involved in the osmoregulation and in the maintenance of cell turgor during volume expansion in rapidly growing cells. It mediates rapid entry or exit of water in response to abrupt changes in osmolarity.</text>
</comment>
<comment type="catalytic activity">
    <reaction evidence="1">
        <text>H2O(in) = H2O(out)</text>
        <dbReference type="Rhea" id="RHEA:29667"/>
        <dbReference type="ChEBI" id="CHEBI:15377"/>
    </reaction>
    <physiologicalReaction direction="left-to-right" evidence="1">
        <dbReference type="Rhea" id="RHEA:29668"/>
    </physiologicalReaction>
    <physiologicalReaction direction="right-to-left" evidence="1">
        <dbReference type="Rhea" id="RHEA:29669"/>
    </physiologicalReaction>
</comment>
<comment type="subunit">
    <text evidence="1">Homotetramer.</text>
</comment>
<comment type="subcellular location">
    <subcellularLocation>
        <location evidence="1">Cell inner membrane</location>
        <topology evidence="1">Multi-pass membrane protein</topology>
    </subcellularLocation>
</comment>
<comment type="domain">
    <text evidence="1">Aquaporins contain two tandem repeats each containing three membrane-spanning domains and a pore-forming loop with the signature motif Asn-Pro-Ala (NPA).</text>
</comment>
<comment type="similarity">
    <text evidence="1">Belongs to the MIP/aquaporin (TC 1.A.8) family.</text>
</comment>
<gene>
    <name evidence="1" type="primary">aqpZ</name>
    <name type="ordered locus">bll7116</name>
</gene>
<proteinExistence type="inferred from homology"/>
<accession>Q89EG9</accession>
<name>AQPZ_BRADU</name>
<keyword id="KW-0997">Cell inner membrane</keyword>
<keyword id="KW-1003">Cell membrane</keyword>
<keyword id="KW-0472">Membrane</keyword>
<keyword id="KW-1185">Reference proteome</keyword>
<keyword id="KW-0677">Repeat</keyword>
<keyword id="KW-0812">Transmembrane</keyword>
<keyword id="KW-1133">Transmembrane helix</keyword>
<keyword id="KW-0813">Transport</keyword>
<organism>
    <name type="scientific">Bradyrhizobium diazoefficiens (strain JCM 10833 / BCRC 13528 / IAM 13628 / NBRC 14792 / USDA 110)</name>
    <dbReference type="NCBI Taxonomy" id="224911"/>
    <lineage>
        <taxon>Bacteria</taxon>
        <taxon>Pseudomonadati</taxon>
        <taxon>Pseudomonadota</taxon>
        <taxon>Alphaproteobacteria</taxon>
        <taxon>Hyphomicrobiales</taxon>
        <taxon>Nitrobacteraceae</taxon>
        <taxon>Bradyrhizobium</taxon>
    </lineage>
</organism>
<protein>
    <recommendedName>
        <fullName evidence="1">Aquaporin Z</fullName>
    </recommendedName>
</protein>
<sequence length="240" mass="24527">MDMKKYAAEAIGTFWLTFAGCGSAVIAAGFPQVGIGLVGVSLAFGLSVVTMAYAIGHISGCHLNPAVTVGLAAGGRFPAGQILPYVIAQVCGAIVAAELLYIIASGAPGFDVTKGFASNGYDAHSPGQYSMMACFLTEVVMTMMFLFIIMGATHGRAPAGFAPLAIGLALVMIHLVSIPVTNTSVNPARSTGPALFVGGWAMAQLWLFWVAPLIGGALGGVIYRWLSEEPTGVVAGAKAA</sequence>
<feature type="chain" id="PRO_0000063982" description="Aquaporin Z">
    <location>
        <begin position="1"/>
        <end position="240"/>
    </location>
</feature>
<feature type="transmembrane region" description="Helical" evidence="1">
    <location>
        <begin position="10"/>
        <end position="30"/>
    </location>
</feature>
<feature type="transmembrane region" description="Helical" evidence="1">
    <location>
        <begin position="35"/>
        <end position="55"/>
    </location>
</feature>
<feature type="transmembrane region" description="Helical" evidence="1">
    <location>
        <begin position="82"/>
        <end position="102"/>
    </location>
</feature>
<feature type="transmembrane region" description="Helical" evidence="1">
    <location>
        <begin position="131"/>
        <end position="151"/>
    </location>
</feature>
<feature type="transmembrane region" description="Helical" evidence="1">
    <location>
        <begin position="160"/>
        <end position="180"/>
    </location>
</feature>
<feature type="transmembrane region" description="Helical" evidence="1">
    <location>
        <begin position="194"/>
        <end position="214"/>
    </location>
</feature>
<feature type="short sequence motif" description="NPA 1" evidence="1">
    <location>
        <begin position="64"/>
        <end position="66"/>
    </location>
</feature>
<feature type="short sequence motif" description="NPA 2" evidence="1">
    <location>
        <begin position="186"/>
        <end position="188"/>
    </location>
</feature>
<feature type="site" description="Involved in tetramerization or stability of the tetramer" evidence="1">
    <location>
        <position position="21"/>
    </location>
</feature>
<feature type="site" description="Selectivity filter" evidence="1">
    <location>
        <position position="44"/>
    </location>
</feature>
<feature type="site" description="Selectivity filter" evidence="1">
    <location>
        <position position="174"/>
    </location>
</feature>
<feature type="site" description="Selectivity filter" evidence="1">
    <location>
        <position position="183"/>
    </location>
</feature>
<feature type="site" description="Selectivity filter" evidence="1">
    <location>
        <position position="189"/>
    </location>
</feature>
<evidence type="ECO:0000255" key="1">
    <source>
        <dbReference type="HAMAP-Rule" id="MF_01146"/>
    </source>
</evidence>
<dbReference type="EMBL" id="BA000040">
    <property type="protein sequence ID" value="BAC52381.1"/>
    <property type="molecule type" value="Genomic_DNA"/>
</dbReference>
<dbReference type="RefSeq" id="NP_773756.1">
    <property type="nucleotide sequence ID" value="NC_004463.1"/>
</dbReference>
<dbReference type="RefSeq" id="WP_011089853.1">
    <property type="nucleotide sequence ID" value="NC_004463.1"/>
</dbReference>
<dbReference type="SMR" id="Q89EG9"/>
<dbReference type="FunCoup" id="Q89EG9">
    <property type="interactions" value="183"/>
</dbReference>
<dbReference type="STRING" id="224911.AAV28_33220"/>
<dbReference type="EnsemblBacteria" id="BAC52381">
    <property type="protein sequence ID" value="BAC52381"/>
    <property type="gene ID" value="BAC52381"/>
</dbReference>
<dbReference type="GeneID" id="46494080"/>
<dbReference type="KEGG" id="bja:bll7116"/>
<dbReference type="PATRIC" id="fig|224911.44.peg.7175"/>
<dbReference type="eggNOG" id="COG0580">
    <property type="taxonomic scope" value="Bacteria"/>
</dbReference>
<dbReference type="HOGENOM" id="CLU_020019_3_2_5"/>
<dbReference type="InParanoid" id="Q89EG9"/>
<dbReference type="OrthoDB" id="9807293at2"/>
<dbReference type="PhylomeDB" id="Q89EG9"/>
<dbReference type="Proteomes" id="UP000002526">
    <property type="component" value="Chromosome"/>
</dbReference>
<dbReference type="GO" id="GO:0005886">
    <property type="term" value="C:plasma membrane"/>
    <property type="evidence" value="ECO:0007669"/>
    <property type="project" value="UniProtKB-SubCell"/>
</dbReference>
<dbReference type="GO" id="GO:0015250">
    <property type="term" value="F:water channel activity"/>
    <property type="evidence" value="ECO:0007669"/>
    <property type="project" value="UniProtKB-UniRule"/>
</dbReference>
<dbReference type="CDD" id="cd00333">
    <property type="entry name" value="MIP"/>
    <property type="match status" value="1"/>
</dbReference>
<dbReference type="FunFam" id="1.20.1080.10:FF:000007">
    <property type="entry name" value="Aquaporin Z"/>
    <property type="match status" value="1"/>
</dbReference>
<dbReference type="Gene3D" id="1.20.1080.10">
    <property type="entry name" value="Glycerol uptake facilitator protein"/>
    <property type="match status" value="1"/>
</dbReference>
<dbReference type="HAMAP" id="MF_01146">
    <property type="entry name" value="Aquaporin_Z"/>
    <property type="match status" value="1"/>
</dbReference>
<dbReference type="InterPro" id="IPR023271">
    <property type="entry name" value="Aquaporin-like"/>
</dbReference>
<dbReference type="InterPro" id="IPR034294">
    <property type="entry name" value="Aquaporin_transptr"/>
</dbReference>
<dbReference type="InterPro" id="IPR023743">
    <property type="entry name" value="Aquaporin_Z"/>
</dbReference>
<dbReference type="InterPro" id="IPR000425">
    <property type="entry name" value="MIP"/>
</dbReference>
<dbReference type="InterPro" id="IPR022357">
    <property type="entry name" value="MIP_CS"/>
</dbReference>
<dbReference type="NCBIfam" id="TIGR00861">
    <property type="entry name" value="MIP"/>
    <property type="match status" value="1"/>
</dbReference>
<dbReference type="NCBIfam" id="NF003838">
    <property type="entry name" value="PRK05420.1"/>
    <property type="match status" value="1"/>
</dbReference>
<dbReference type="PANTHER" id="PTHR19139">
    <property type="entry name" value="AQUAPORIN TRANSPORTER"/>
    <property type="match status" value="1"/>
</dbReference>
<dbReference type="PANTHER" id="PTHR19139:SF199">
    <property type="entry name" value="MIP17260P"/>
    <property type="match status" value="1"/>
</dbReference>
<dbReference type="Pfam" id="PF00230">
    <property type="entry name" value="MIP"/>
    <property type="match status" value="1"/>
</dbReference>
<dbReference type="PRINTS" id="PR00783">
    <property type="entry name" value="MINTRINSICP"/>
</dbReference>
<dbReference type="SUPFAM" id="SSF81338">
    <property type="entry name" value="Aquaporin-like"/>
    <property type="match status" value="1"/>
</dbReference>
<dbReference type="PROSITE" id="PS00221">
    <property type="entry name" value="MIP"/>
    <property type="match status" value="1"/>
</dbReference>